<comment type="function">
    <text evidence="1">Hydrolyzes ribosome-free peptidyl-tRNAs (with 1 or more amino acids incorporated), which drop off the ribosome during protein synthesis, or as a result of ribosome stalling.</text>
</comment>
<comment type="function">
    <text evidence="1">Catalyzes the release of premature peptidyl moieties from peptidyl-tRNA molecules trapped in stalled 50S ribosomal subunits, and thus maintains levels of free tRNAs and 50S ribosomes.</text>
</comment>
<comment type="catalytic activity">
    <reaction evidence="1">
        <text>an N-acyl-L-alpha-aminoacyl-tRNA + H2O = an N-acyl-L-amino acid + a tRNA + H(+)</text>
        <dbReference type="Rhea" id="RHEA:54448"/>
        <dbReference type="Rhea" id="RHEA-COMP:10123"/>
        <dbReference type="Rhea" id="RHEA-COMP:13883"/>
        <dbReference type="ChEBI" id="CHEBI:15377"/>
        <dbReference type="ChEBI" id="CHEBI:15378"/>
        <dbReference type="ChEBI" id="CHEBI:59874"/>
        <dbReference type="ChEBI" id="CHEBI:78442"/>
        <dbReference type="ChEBI" id="CHEBI:138191"/>
        <dbReference type="EC" id="3.1.1.29"/>
    </reaction>
</comment>
<comment type="subunit">
    <text evidence="1">Monomer.</text>
</comment>
<comment type="subcellular location">
    <subcellularLocation>
        <location evidence="1">Cytoplasm</location>
    </subcellularLocation>
</comment>
<comment type="similarity">
    <text evidence="1">Belongs to the PTH family.</text>
</comment>
<protein>
    <recommendedName>
        <fullName evidence="1">Peptidyl-tRNA hydrolase</fullName>
        <shortName evidence="1">Pth</shortName>
        <ecNumber evidence="1">3.1.1.29</ecNumber>
    </recommendedName>
</protein>
<keyword id="KW-0963">Cytoplasm</keyword>
<keyword id="KW-0378">Hydrolase</keyword>
<keyword id="KW-1185">Reference proteome</keyword>
<keyword id="KW-0694">RNA-binding</keyword>
<keyword id="KW-0820">tRNA-binding</keyword>
<sequence length="194" mass="20949">MTAIQLIVGLGNPGPEYEQTRHNAGALFVERLASAQRVSLTADKKYFGLTAKFSHQGNDVRLLIPTTYMNRSGQSVAALANFFRIKPEAILVAHDELDLPPGVAKLKRGGGHGGHNGLRDIIAQLGNQNDFHRLRLGIGHPGDAKLVSNFVLGRAPRAEQEKLDASIDFALGVLPDVLAGDFAKAMRELHSQKA</sequence>
<organism>
    <name type="scientific">Pseudomonas putida (strain ATCC 47054 / DSM 6125 / CFBP 8728 / NCIMB 11950 / KT2440)</name>
    <dbReference type="NCBI Taxonomy" id="160488"/>
    <lineage>
        <taxon>Bacteria</taxon>
        <taxon>Pseudomonadati</taxon>
        <taxon>Pseudomonadota</taxon>
        <taxon>Gammaproteobacteria</taxon>
        <taxon>Pseudomonadales</taxon>
        <taxon>Pseudomonadaceae</taxon>
        <taxon>Pseudomonas</taxon>
    </lineage>
</organism>
<gene>
    <name evidence="1" type="primary">pth</name>
    <name type="ordered locus">PP_0720</name>
</gene>
<evidence type="ECO:0000255" key="1">
    <source>
        <dbReference type="HAMAP-Rule" id="MF_00083"/>
    </source>
</evidence>
<accession>Q88PX8</accession>
<dbReference type="EC" id="3.1.1.29" evidence="1"/>
<dbReference type="EMBL" id="AE015451">
    <property type="protein sequence ID" value="AAN66345.1"/>
    <property type="molecule type" value="Genomic_DNA"/>
</dbReference>
<dbReference type="RefSeq" id="NP_742881.1">
    <property type="nucleotide sequence ID" value="NC_002947.4"/>
</dbReference>
<dbReference type="RefSeq" id="WP_003247413.1">
    <property type="nucleotide sequence ID" value="NZ_CP169744.1"/>
</dbReference>
<dbReference type="SMR" id="Q88PX8"/>
<dbReference type="STRING" id="160488.PP_0720"/>
<dbReference type="PaxDb" id="160488-PP_0720"/>
<dbReference type="GeneID" id="83678068"/>
<dbReference type="KEGG" id="ppu:PP_0720"/>
<dbReference type="PATRIC" id="fig|160488.4.peg.769"/>
<dbReference type="eggNOG" id="COG0193">
    <property type="taxonomic scope" value="Bacteria"/>
</dbReference>
<dbReference type="HOGENOM" id="CLU_062456_3_1_6"/>
<dbReference type="OrthoDB" id="9800507at2"/>
<dbReference type="PhylomeDB" id="Q88PX8"/>
<dbReference type="BioCyc" id="PPUT160488:G1G01-794-MONOMER"/>
<dbReference type="Proteomes" id="UP000000556">
    <property type="component" value="Chromosome"/>
</dbReference>
<dbReference type="GO" id="GO:0005737">
    <property type="term" value="C:cytoplasm"/>
    <property type="evidence" value="ECO:0007669"/>
    <property type="project" value="UniProtKB-SubCell"/>
</dbReference>
<dbReference type="GO" id="GO:0004045">
    <property type="term" value="F:peptidyl-tRNA hydrolase activity"/>
    <property type="evidence" value="ECO:0007669"/>
    <property type="project" value="UniProtKB-UniRule"/>
</dbReference>
<dbReference type="GO" id="GO:0000049">
    <property type="term" value="F:tRNA binding"/>
    <property type="evidence" value="ECO:0007669"/>
    <property type="project" value="UniProtKB-UniRule"/>
</dbReference>
<dbReference type="GO" id="GO:0006515">
    <property type="term" value="P:protein quality control for misfolded or incompletely synthesized proteins"/>
    <property type="evidence" value="ECO:0007669"/>
    <property type="project" value="UniProtKB-UniRule"/>
</dbReference>
<dbReference type="GO" id="GO:0072344">
    <property type="term" value="P:rescue of stalled ribosome"/>
    <property type="evidence" value="ECO:0007669"/>
    <property type="project" value="UniProtKB-UniRule"/>
</dbReference>
<dbReference type="CDD" id="cd00462">
    <property type="entry name" value="PTH"/>
    <property type="match status" value="1"/>
</dbReference>
<dbReference type="FunFam" id="3.40.50.1470:FF:000001">
    <property type="entry name" value="Peptidyl-tRNA hydrolase"/>
    <property type="match status" value="1"/>
</dbReference>
<dbReference type="Gene3D" id="3.40.50.1470">
    <property type="entry name" value="Peptidyl-tRNA hydrolase"/>
    <property type="match status" value="1"/>
</dbReference>
<dbReference type="HAMAP" id="MF_00083">
    <property type="entry name" value="Pept_tRNA_hydro_bact"/>
    <property type="match status" value="1"/>
</dbReference>
<dbReference type="InterPro" id="IPR001328">
    <property type="entry name" value="Pept_tRNA_hydro"/>
</dbReference>
<dbReference type="InterPro" id="IPR018171">
    <property type="entry name" value="Pept_tRNA_hydro_CS"/>
</dbReference>
<dbReference type="InterPro" id="IPR036416">
    <property type="entry name" value="Pept_tRNA_hydro_sf"/>
</dbReference>
<dbReference type="NCBIfam" id="TIGR00447">
    <property type="entry name" value="pth"/>
    <property type="match status" value="1"/>
</dbReference>
<dbReference type="PANTHER" id="PTHR17224">
    <property type="entry name" value="PEPTIDYL-TRNA HYDROLASE"/>
    <property type="match status" value="1"/>
</dbReference>
<dbReference type="PANTHER" id="PTHR17224:SF1">
    <property type="entry name" value="PEPTIDYL-TRNA HYDROLASE"/>
    <property type="match status" value="1"/>
</dbReference>
<dbReference type="Pfam" id="PF01195">
    <property type="entry name" value="Pept_tRNA_hydro"/>
    <property type="match status" value="1"/>
</dbReference>
<dbReference type="SUPFAM" id="SSF53178">
    <property type="entry name" value="Peptidyl-tRNA hydrolase-like"/>
    <property type="match status" value="1"/>
</dbReference>
<dbReference type="PROSITE" id="PS01195">
    <property type="entry name" value="PEPT_TRNA_HYDROL_1"/>
    <property type="match status" value="1"/>
</dbReference>
<dbReference type="PROSITE" id="PS01196">
    <property type="entry name" value="PEPT_TRNA_HYDROL_2"/>
    <property type="match status" value="1"/>
</dbReference>
<feature type="chain" id="PRO_0000187797" description="Peptidyl-tRNA hydrolase">
    <location>
        <begin position="1"/>
        <end position="194"/>
    </location>
</feature>
<feature type="active site" description="Proton acceptor" evidence="1">
    <location>
        <position position="22"/>
    </location>
</feature>
<feature type="binding site" evidence="1">
    <location>
        <position position="17"/>
    </location>
    <ligand>
        <name>tRNA</name>
        <dbReference type="ChEBI" id="CHEBI:17843"/>
    </ligand>
</feature>
<feature type="binding site" evidence="1">
    <location>
        <position position="68"/>
    </location>
    <ligand>
        <name>tRNA</name>
        <dbReference type="ChEBI" id="CHEBI:17843"/>
    </ligand>
</feature>
<feature type="binding site" evidence="1">
    <location>
        <position position="70"/>
    </location>
    <ligand>
        <name>tRNA</name>
        <dbReference type="ChEBI" id="CHEBI:17843"/>
    </ligand>
</feature>
<feature type="binding site" evidence="1">
    <location>
        <position position="116"/>
    </location>
    <ligand>
        <name>tRNA</name>
        <dbReference type="ChEBI" id="CHEBI:17843"/>
    </ligand>
</feature>
<feature type="site" description="Discriminates between blocked and unblocked aminoacyl-tRNA" evidence="1">
    <location>
        <position position="12"/>
    </location>
</feature>
<feature type="site" description="Stabilizes the basic form of H active site to accept a proton" evidence="1">
    <location>
        <position position="95"/>
    </location>
</feature>
<reference key="1">
    <citation type="journal article" date="2002" name="Environ. Microbiol.">
        <title>Complete genome sequence and comparative analysis of the metabolically versatile Pseudomonas putida KT2440.</title>
        <authorList>
            <person name="Nelson K.E."/>
            <person name="Weinel C."/>
            <person name="Paulsen I.T."/>
            <person name="Dodson R.J."/>
            <person name="Hilbert H."/>
            <person name="Martins dos Santos V.A.P."/>
            <person name="Fouts D.E."/>
            <person name="Gill S.R."/>
            <person name="Pop M."/>
            <person name="Holmes M."/>
            <person name="Brinkac L.M."/>
            <person name="Beanan M.J."/>
            <person name="DeBoy R.T."/>
            <person name="Daugherty S.C."/>
            <person name="Kolonay J.F."/>
            <person name="Madupu R."/>
            <person name="Nelson W.C."/>
            <person name="White O."/>
            <person name="Peterson J.D."/>
            <person name="Khouri H.M."/>
            <person name="Hance I."/>
            <person name="Chris Lee P."/>
            <person name="Holtzapple E.K."/>
            <person name="Scanlan D."/>
            <person name="Tran K."/>
            <person name="Moazzez A."/>
            <person name="Utterback T.R."/>
            <person name="Rizzo M."/>
            <person name="Lee K."/>
            <person name="Kosack D."/>
            <person name="Moestl D."/>
            <person name="Wedler H."/>
            <person name="Lauber J."/>
            <person name="Stjepandic D."/>
            <person name="Hoheisel J."/>
            <person name="Straetz M."/>
            <person name="Heim S."/>
            <person name="Kiewitz C."/>
            <person name="Eisen J.A."/>
            <person name="Timmis K.N."/>
            <person name="Duesterhoeft A."/>
            <person name="Tuemmler B."/>
            <person name="Fraser C.M."/>
        </authorList>
    </citation>
    <scope>NUCLEOTIDE SEQUENCE [LARGE SCALE GENOMIC DNA]</scope>
    <source>
        <strain>ATCC 47054 / DSM 6125 / CFBP 8728 / NCIMB 11950 / KT2440</strain>
    </source>
</reference>
<proteinExistence type="inferred from homology"/>
<name>PTH_PSEPK</name>